<feature type="chain" id="PRO_1000200120" description="Probable transcriptional regulatory protein VS_II1504">
    <location>
        <begin position="1"/>
        <end position="238"/>
    </location>
</feature>
<evidence type="ECO:0000255" key="1">
    <source>
        <dbReference type="HAMAP-Rule" id="MF_00693"/>
    </source>
</evidence>
<name>Y4704_VIBA3</name>
<organism>
    <name type="scientific">Vibrio atlanticus (strain LGP32)</name>
    <name type="common">Vibrio splendidus (strain Mel32)</name>
    <dbReference type="NCBI Taxonomy" id="575788"/>
    <lineage>
        <taxon>Bacteria</taxon>
        <taxon>Pseudomonadati</taxon>
        <taxon>Pseudomonadota</taxon>
        <taxon>Gammaproteobacteria</taxon>
        <taxon>Vibrionales</taxon>
        <taxon>Vibrionaceae</taxon>
        <taxon>Vibrio</taxon>
    </lineage>
</organism>
<reference key="1">
    <citation type="submission" date="2009-02" db="EMBL/GenBank/DDBJ databases">
        <title>Vibrio splendidus str. LGP32 complete genome.</title>
        <authorList>
            <person name="Mazel D."/>
            <person name="Le Roux F."/>
        </authorList>
    </citation>
    <scope>NUCLEOTIDE SEQUENCE [LARGE SCALE GENOMIC DNA]</scope>
    <source>
        <strain>LGP32</strain>
    </source>
</reference>
<comment type="subcellular location">
    <subcellularLocation>
        <location evidence="1">Cytoplasm</location>
    </subcellularLocation>
</comment>
<comment type="similarity">
    <text evidence="1">Belongs to the TACO1 family.</text>
</comment>
<keyword id="KW-0963">Cytoplasm</keyword>
<keyword id="KW-0238">DNA-binding</keyword>
<keyword id="KW-0804">Transcription</keyword>
<keyword id="KW-0805">Transcription regulation</keyword>
<sequence>MGRSFEVRKASMAKTAGAKIKVYSKYGKEIYVLAKNGSSDPDMNLPLKHLIAKAKKDQVPAHVIDKAIDKANGGGGEDFQPARYEGFGPGGTSVIVDCLTDNGNRTFQDVRQCFVKTGAKIGVEGTVSHMFAHQAVFQFAGEDDEIILETLMMEDVDVTDVELEDGVITVFAPTTEFFKTKTALNAAFPDLTLDVEEITFVPQTTTPIAEEDSEKFQKFLDMLDDCDDVQQVYHNAEL</sequence>
<gene>
    <name type="ordered locus">VS_II1504</name>
</gene>
<accession>B7VU31</accession>
<dbReference type="EMBL" id="FM954973">
    <property type="protein sequence ID" value="CAV27702.1"/>
    <property type="molecule type" value="Genomic_DNA"/>
</dbReference>
<dbReference type="SMR" id="B7VU31"/>
<dbReference type="STRING" id="575788.VS_II1504"/>
<dbReference type="KEGG" id="vsp:VS_II1504"/>
<dbReference type="PATRIC" id="fig|575788.5.peg.1390"/>
<dbReference type="eggNOG" id="COG0217">
    <property type="taxonomic scope" value="Bacteria"/>
</dbReference>
<dbReference type="HOGENOM" id="CLU_062974_2_0_6"/>
<dbReference type="Proteomes" id="UP000009100">
    <property type="component" value="Chromosome 2"/>
</dbReference>
<dbReference type="GO" id="GO:0005829">
    <property type="term" value="C:cytosol"/>
    <property type="evidence" value="ECO:0007669"/>
    <property type="project" value="TreeGrafter"/>
</dbReference>
<dbReference type="GO" id="GO:0003677">
    <property type="term" value="F:DNA binding"/>
    <property type="evidence" value="ECO:0007669"/>
    <property type="project" value="UniProtKB-UniRule"/>
</dbReference>
<dbReference type="GO" id="GO:0006355">
    <property type="term" value="P:regulation of DNA-templated transcription"/>
    <property type="evidence" value="ECO:0007669"/>
    <property type="project" value="UniProtKB-UniRule"/>
</dbReference>
<dbReference type="Gene3D" id="1.10.10.200">
    <property type="match status" value="1"/>
</dbReference>
<dbReference type="Gene3D" id="3.30.70.980">
    <property type="match status" value="2"/>
</dbReference>
<dbReference type="HAMAP" id="MF_00693">
    <property type="entry name" value="Transcrip_reg_TACO1"/>
    <property type="match status" value="1"/>
</dbReference>
<dbReference type="InterPro" id="IPR017856">
    <property type="entry name" value="Integrase-like_N"/>
</dbReference>
<dbReference type="InterPro" id="IPR048300">
    <property type="entry name" value="TACO1_YebC-like_2nd/3rd_dom"/>
</dbReference>
<dbReference type="InterPro" id="IPR049083">
    <property type="entry name" value="TACO1_YebC_N"/>
</dbReference>
<dbReference type="InterPro" id="IPR002876">
    <property type="entry name" value="Transcrip_reg_TACO1-like"/>
</dbReference>
<dbReference type="InterPro" id="IPR026564">
    <property type="entry name" value="Transcrip_reg_TACO1-like_dom3"/>
</dbReference>
<dbReference type="InterPro" id="IPR029072">
    <property type="entry name" value="YebC-like"/>
</dbReference>
<dbReference type="NCBIfam" id="NF009044">
    <property type="entry name" value="PRK12378.1"/>
    <property type="match status" value="1"/>
</dbReference>
<dbReference type="PANTHER" id="PTHR12532">
    <property type="entry name" value="TRANSLATIONAL ACTIVATOR OF CYTOCHROME C OXIDASE 1"/>
    <property type="match status" value="1"/>
</dbReference>
<dbReference type="PANTHER" id="PTHR12532:SF0">
    <property type="entry name" value="TRANSLATIONAL ACTIVATOR OF CYTOCHROME C OXIDASE 1"/>
    <property type="match status" value="1"/>
</dbReference>
<dbReference type="Pfam" id="PF20772">
    <property type="entry name" value="TACO1_YebC_N"/>
    <property type="match status" value="1"/>
</dbReference>
<dbReference type="Pfam" id="PF01709">
    <property type="entry name" value="Transcrip_reg"/>
    <property type="match status" value="1"/>
</dbReference>
<dbReference type="SUPFAM" id="SSF75625">
    <property type="entry name" value="YebC-like"/>
    <property type="match status" value="1"/>
</dbReference>
<protein>
    <recommendedName>
        <fullName evidence="1">Probable transcriptional regulatory protein VS_II1504</fullName>
    </recommendedName>
</protein>
<proteinExistence type="inferred from homology"/>